<feature type="chain" id="PRO_0000406433" description="Transcription activator of gluconeogenesis acuK">
    <location>
        <begin position="1"/>
        <end position="686"/>
    </location>
</feature>
<feature type="DNA-binding region" description="Zn(2)-C6 fungal-type" evidence="2">
    <location>
        <begin position="71"/>
        <end position="99"/>
    </location>
</feature>
<feature type="region of interest" description="Disordered" evidence="3">
    <location>
        <begin position="1"/>
        <end position="64"/>
    </location>
</feature>
<feature type="region of interest" description="Disordered" evidence="3">
    <location>
        <begin position="177"/>
        <end position="224"/>
    </location>
</feature>
<feature type="region of interest" description="Disordered" evidence="3">
    <location>
        <begin position="265"/>
        <end position="378"/>
    </location>
</feature>
<feature type="region of interest" description="Disordered" evidence="3">
    <location>
        <begin position="390"/>
        <end position="422"/>
    </location>
</feature>
<feature type="region of interest" description="Disordered" evidence="3">
    <location>
        <begin position="544"/>
        <end position="572"/>
    </location>
</feature>
<feature type="compositionally biased region" description="Polar residues" evidence="3">
    <location>
        <begin position="177"/>
        <end position="222"/>
    </location>
</feature>
<feature type="compositionally biased region" description="Polar residues" evidence="3">
    <location>
        <begin position="269"/>
        <end position="292"/>
    </location>
</feature>
<feature type="compositionally biased region" description="Polar residues" evidence="3">
    <location>
        <begin position="362"/>
        <end position="378"/>
    </location>
</feature>
<feature type="compositionally biased region" description="Polar residues" evidence="3">
    <location>
        <begin position="403"/>
        <end position="415"/>
    </location>
</feature>
<feature type="compositionally biased region" description="Polar residues" evidence="3">
    <location>
        <begin position="544"/>
        <end position="570"/>
    </location>
</feature>
<gene>
    <name type="primary">acuK</name>
    <name type="ORF">AN7468</name>
</gene>
<name>ACUK_ASPNC</name>
<sequence>MNAEPKEQDSPAPSAERTEASQEISAAGAQADKPKTEANGDGTANGASANGQKPNPKDPSRPRRKKARRACFACQRAHLTCGDERPCQRCIKRGLQDACHDGVRKKAKYLHDAPDGALMPGIGGTFYNNPMRNSLPLSRNGANAVNATGQQSAGANFYPTPQSTTYVYQENTINQGSFPSQSPVSPTFNLKATPTARTNSLSSVNPQPPSTSVSGPPGQGQNPFAGPFFDPSDPALFNFDLSSMNFENRYGALEFGMLGHMATGAGDSPSDSATQRGSMGRSGSAQYASTPITGAPGFGESPGNQQPFMFGDPLLNEWPSGQAPGQPHLPGVYPQSGQGSAIPGHLSKADAPHAFAIESGPASFNSPGATTSPQMTTGLEETPFHSAVASKSNGLAPHGQRPMITTPSLKHQNLQVGVRRRQRNPSAIYDSVKEPYAYTSRFHGLTAFIQRRFPPQKTLQIAKALASIRPSFIATTKTLNRDDLIFMEKCFQRTLWEYEDFINACGTPTIVCRRTGEIAAVGKEFSILTGWKKDVLLGKEPNLNVNTGGSSMPNSGASSRSFTPRSTVDNTPGRPQPVFLAELLDDDSVVQFYEDFARLAFGDSRGSVMTTCKLLKYKTKEDMEGAAAEDSQRWNNHLRKGGIASEAGMNQLGFKDGKVECAYCWTVKRDVFDIPMLIVMNFLPCI</sequence>
<dbReference type="EMBL" id="AM270040">
    <property type="protein sequence ID" value="CAK48879.1"/>
    <property type="molecule type" value="Genomic_DNA"/>
</dbReference>
<dbReference type="RefSeq" id="XP_001400579.1">
    <property type="nucleotide sequence ID" value="XM_001400542.2"/>
</dbReference>
<dbReference type="SMR" id="A2QFG8"/>
<dbReference type="EnsemblFungi" id="CAK48879">
    <property type="protein sequence ID" value="CAK48879"/>
    <property type="gene ID" value="An02g14490"/>
</dbReference>
<dbReference type="KEGG" id="ang:An02g14490"/>
<dbReference type="VEuPathDB" id="FungiDB:An02g14490"/>
<dbReference type="HOGENOM" id="CLU_010748_1_0_1"/>
<dbReference type="Proteomes" id="UP000006706">
    <property type="component" value="Chromosome 4R"/>
</dbReference>
<dbReference type="GO" id="GO:0005634">
    <property type="term" value="C:nucleus"/>
    <property type="evidence" value="ECO:0007669"/>
    <property type="project" value="UniProtKB-SubCell"/>
</dbReference>
<dbReference type="GO" id="GO:0000981">
    <property type="term" value="F:DNA-binding transcription factor activity, RNA polymerase II-specific"/>
    <property type="evidence" value="ECO:0007669"/>
    <property type="project" value="InterPro"/>
</dbReference>
<dbReference type="GO" id="GO:0000977">
    <property type="term" value="F:RNA polymerase II transcription regulatory region sequence-specific DNA binding"/>
    <property type="evidence" value="ECO:0007669"/>
    <property type="project" value="TreeGrafter"/>
</dbReference>
<dbReference type="GO" id="GO:0008270">
    <property type="term" value="F:zinc ion binding"/>
    <property type="evidence" value="ECO:0007669"/>
    <property type="project" value="InterPro"/>
</dbReference>
<dbReference type="GO" id="GO:0009267">
    <property type="term" value="P:cellular response to starvation"/>
    <property type="evidence" value="ECO:0007669"/>
    <property type="project" value="TreeGrafter"/>
</dbReference>
<dbReference type="GO" id="GO:0006094">
    <property type="term" value="P:gluconeogenesis"/>
    <property type="evidence" value="ECO:0007669"/>
    <property type="project" value="UniProtKB-KW"/>
</dbReference>
<dbReference type="GO" id="GO:0009893">
    <property type="term" value="P:positive regulation of metabolic process"/>
    <property type="evidence" value="ECO:0007669"/>
    <property type="project" value="UniProtKB-ARBA"/>
</dbReference>
<dbReference type="CDD" id="cd00067">
    <property type="entry name" value="GAL4"/>
    <property type="match status" value="1"/>
</dbReference>
<dbReference type="Gene3D" id="4.10.240.10">
    <property type="entry name" value="Zn(2)-C6 fungal-type DNA-binding domain"/>
    <property type="match status" value="1"/>
</dbReference>
<dbReference type="InterPro" id="IPR050335">
    <property type="entry name" value="ERT1_acuK_gluconeogen_tf"/>
</dbReference>
<dbReference type="InterPro" id="IPR056751">
    <property type="entry name" value="PAS_13"/>
</dbReference>
<dbReference type="InterPro" id="IPR036864">
    <property type="entry name" value="Zn2-C6_fun-type_DNA-bd_sf"/>
</dbReference>
<dbReference type="InterPro" id="IPR001138">
    <property type="entry name" value="Zn2Cys6_DnaBD"/>
</dbReference>
<dbReference type="PANTHER" id="PTHR47659:SF1">
    <property type="entry name" value="TRANSCRIPTION ACTIVATOR OF GLUCONEOGENESIS ERT1"/>
    <property type="match status" value="1"/>
</dbReference>
<dbReference type="PANTHER" id="PTHR47659">
    <property type="entry name" value="ZN(II)2CYS6 TRANSCRIPTION FACTOR (EUROFUNG)-RELATED"/>
    <property type="match status" value="1"/>
</dbReference>
<dbReference type="Pfam" id="PF24990">
    <property type="entry name" value="PAS_13"/>
    <property type="match status" value="1"/>
</dbReference>
<dbReference type="SMART" id="SM00066">
    <property type="entry name" value="GAL4"/>
    <property type="match status" value="1"/>
</dbReference>
<dbReference type="SUPFAM" id="SSF57701">
    <property type="entry name" value="Zn2/Cys6 DNA-binding domain"/>
    <property type="match status" value="1"/>
</dbReference>
<dbReference type="PROSITE" id="PS50048">
    <property type="entry name" value="ZN2_CY6_FUNGAL_2"/>
    <property type="match status" value="1"/>
</dbReference>
<protein>
    <recommendedName>
        <fullName>Transcription activator of gluconeogenesis acuK</fullName>
    </recommendedName>
</protein>
<comment type="function">
    <text evidence="1">Transcription factor which regulates nonfermentable carbon utilization. Activator of gluconeogenetic genes (By similarity).</text>
</comment>
<comment type="subcellular location">
    <subcellularLocation>
        <location evidence="2">Nucleus</location>
    </subcellularLocation>
</comment>
<comment type="similarity">
    <text evidence="4">Belongs to the ERT1/acuK family.</text>
</comment>
<reference key="1">
    <citation type="journal article" date="2007" name="Nat. Biotechnol.">
        <title>Genome sequencing and analysis of the versatile cell factory Aspergillus niger CBS 513.88.</title>
        <authorList>
            <person name="Pel H.J."/>
            <person name="de Winde J.H."/>
            <person name="Archer D.B."/>
            <person name="Dyer P.S."/>
            <person name="Hofmann G."/>
            <person name="Schaap P.J."/>
            <person name="Turner G."/>
            <person name="de Vries R.P."/>
            <person name="Albang R."/>
            <person name="Albermann K."/>
            <person name="Andersen M.R."/>
            <person name="Bendtsen J.D."/>
            <person name="Benen J.A.E."/>
            <person name="van den Berg M."/>
            <person name="Breestraat S."/>
            <person name="Caddick M.X."/>
            <person name="Contreras R."/>
            <person name="Cornell M."/>
            <person name="Coutinho P.M."/>
            <person name="Danchin E.G.J."/>
            <person name="Debets A.J.M."/>
            <person name="Dekker P."/>
            <person name="van Dijck P.W.M."/>
            <person name="van Dijk A."/>
            <person name="Dijkhuizen L."/>
            <person name="Driessen A.J.M."/>
            <person name="d'Enfert C."/>
            <person name="Geysens S."/>
            <person name="Goosen C."/>
            <person name="Groot G.S.P."/>
            <person name="de Groot P.W.J."/>
            <person name="Guillemette T."/>
            <person name="Henrissat B."/>
            <person name="Herweijer M."/>
            <person name="van den Hombergh J.P.T.W."/>
            <person name="van den Hondel C.A.M.J.J."/>
            <person name="van der Heijden R.T.J.M."/>
            <person name="van der Kaaij R.M."/>
            <person name="Klis F.M."/>
            <person name="Kools H.J."/>
            <person name="Kubicek C.P."/>
            <person name="van Kuyk P.A."/>
            <person name="Lauber J."/>
            <person name="Lu X."/>
            <person name="van der Maarel M.J.E.C."/>
            <person name="Meulenberg R."/>
            <person name="Menke H."/>
            <person name="Mortimer M.A."/>
            <person name="Nielsen J."/>
            <person name="Oliver S.G."/>
            <person name="Olsthoorn M."/>
            <person name="Pal K."/>
            <person name="van Peij N.N.M.E."/>
            <person name="Ram A.F.J."/>
            <person name="Rinas U."/>
            <person name="Roubos J.A."/>
            <person name="Sagt C.M.J."/>
            <person name="Schmoll M."/>
            <person name="Sun J."/>
            <person name="Ussery D."/>
            <person name="Varga J."/>
            <person name="Vervecken W."/>
            <person name="van de Vondervoort P.J.J."/>
            <person name="Wedler H."/>
            <person name="Woesten H.A.B."/>
            <person name="Zeng A.-P."/>
            <person name="van Ooyen A.J.J."/>
            <person name="Visser J."/>
            <person name="Stam H."/>
        </authorList>
    </citation>
    <scope>NUCLEOTIDE SEQUENCE [LARGE SCALE GENOMIC DNA]</scope>
    <source>
        <strain>ATCC MYA-4892 / CBS 513.88 / FGSC A1513</strain>
    </source>
</reference>
<keyword id="KW-0010">Activator</keyword>
<keyword id="KW-0238">DNA-binding</keyword>
<keyword id="KW-0312">Gluconeogenesis</keyword>
<keyword id="KW-0479">Metal-binding</keyword>
<keyword id="KW-0539">Nucleus</keyword>
<keyword id="KW-1185">Reference proteome</keyword>
<keyword id="KW-0804">Transcription</keyword>
<keyword id="KW-0805">Transcription regulation</keyword>
<keyword id="KW-0862">Zinc</keyword>
<evidence type="ECO:0000250" key="1"/>
<evidence type="ECO:0000255" key="2">
    <source>
        <dbReference type="PROSITE-ProRule" id="PRU00227"/>
    </source>
</evidence>
<evidence type="ECO:0000256" key="3">
    <source>
        <dbReference type="SAM" id="MobiDB-lite"/>
    </source>
</evidence>
<evidence type="ECO:0000305" key="4"/>
<accession>A2QFG8</accession>
<proteinExistence type="inferred from homology"/>
<organism>
    <name type="scientific">Aspergillus niger (strain ATCC MYA-4892 / CBS 513.88 / FGSC A1513)</name>
    <dbReference type="NCBI Taxonomy" id="425011"/>
    <lineage>
        <taxon>Eukaryota</taxon>
        <taxon>Fungi</taxon>
        <taxon>Dikarya</taxon>
        <taxon>Ascomycota</taxon>
        <taxon>Pezizomycotina</taxon>
        <taxon>Eurotiomycetes</taxon>
        <taxon>Eurotiomycetidae</taxon>
        <taxon>Eurotiales</taxon>
        <taxon>Aspergillaceae</taxon>
        <taxon>Aspergillus</taxon>
        <taxon>Aspergillus subgen. Circumdati</taxon>
    </lineage>
</organism>